<protein>
    <recommendedName>
        <fullName>Cold shock-like protein CspE</fullName>
        <shortName>CSP-E</shortName>
    </recommendedName>
</protein>
<comment type="subcellular location">
    <subcellularLocation>
        <location evidence="1">Cytoplasm</location>
    </subcellularLocation>
</comment>
<comment type="mass spectrometry"/>
<comment type="sequence caution" evidence="4">
    <conflict type="erroneous initiation">
        <sequence resource="EMBL-CDS" id="AAB40823"/>
    </conflict>
</comment>
<dbReference type="EMBL" id="D28497">
    <property type="protein sequence ID" value="BAA05856.1"/>
    <property type="molecule type" value="Genomic_DNA"/>
</dbReference>
<dbReference type="EMBL" id="L29054">
    <property type="protein sequence ID" value="AAA67556.1"/>
    <property type="molecule type" value="Genomic_DNA"/>
</dbReference>
<dbReference type="EMBL" id="S83396">
    <property type="protein sequence ID" value="AAN86720.1"/>
    <property type="molecule type" value="Genomic_DNA"/>
</dbReference>
<dbReference type="EMBL" id="U82598">
    <property type="protein sequence ID" value="AAB40823.1"/>
    <property type="status" value="ALT_INIT"/>
    <property type="molecule type" value="Genomic_DNA"/>
</dbReference>
<dbReference type="EMBL" id="U00096">
    <property type="protein sequence ID" value="AAC73724.1"/>
    <property type="molecule type" value="Genomic_DNA"/>
</dbReference>
<dbReference type="EMBL" id="AP009048">
    <property type="protein sequence ID" value="BAA35266.1"/>
    <property type="molecule type" value="Genomic_DNA"/>
</dbReference>
<dbReference type="PIR" id="S49050">
    <property type="entry name" value="S49050"/>
</dbReference>
<dbReference type="RefSeq" id="NP_415156.1">
    <property type="nucleotide sequence ID" value="NC_000913.3"/>
</dbReference>
<dbReference type="RefSeq" id="WP_000034825.1">
    <property type="nucleotide sequence ID" value="NZ_STEB01000031.1"/>
</dbReference>
<dbReference type="SMR" id="P0A972"/>
<dbReference type="BioGRID" id="4260642">
    <property type="interactions" value="189"/>
</dbReference>
<dbReference type="DIP" id="DIP-47834N"/>
<dbReference type="FunCoup" id="P0A972">
    <property type="interactions" value="425"/>
</dbReference>
<dbReference type="IntAct" id="P0A972">
    <property type="interactions" value="49"/>
</dbReference>
<dbReference type="STRING" id="511145.b0623"/>
<dbReference type="jPOST" id="P0A972"/>
<dbReference type="PaxDb" id="511145-b0623"/>
<dbReference type="EnsemblBacteria" id="AAC73724">
    <property type="protein sequence ID" value="AAC73724"/>
    <property type="gene ID" value="b0623"/>
</dbReference>
<dbReference type="GeneID" id="947024"/>
<dbReference type="GeneID" id="98387317"/>
<dbReference type="KEGG" id="ecj:JW0618"/>
<dbReference type="KEGG" id="eco:b0623"/>
<dbReference type="KEGG" id="ecoc:C3026_03115"/>
<dbReference type="PATRIC" id="fig|1411691.4.peg.1645"/>
<dbReference type="EchoBASE" id="EB2096"/>
<dbReference type="eggNOG" id="COG1278">
    <property type="taxonomic scope" value="Bacteria"/>
</dbReference>
<dbReference type="HOGENOM" id="CLU_117621_2_1_6"/>
<dbReference type="InParanoid" id="P0A972"/>
<dbReference type="OMA" id="EIEPGQN"/>
<dbReference type="OrthoDB" id="9810590at2"/>
<dbReference type="PhylomeDB" id="P0A972"/>
<dbReference type="BioCyc" id="EcoCyc:EG12179-MONOMER"/>
<dbReference type="PRO" id="PR:P0A972"/>
<dbReference type="Proteomes" id="UP000000625">
    <property type="component" value="Chromosome"/>
</dbReference>
<dbReference type="GO" id="GO:0005829">
    <property type="term" value="C:cytosol"/>
    <property type="evidence" value="ECO:0000314"/>
    <property type="project" value="EcoCyc"/>
</dbReference>
<dbReference type="GO" id="GO:0003676">
    <property type="term" value="F:nucleic acid binding"/>
    <property type="evidence" value="ECO:0000318"/>
    <property type="project" value="GO_Central"/>
</dbReference>
<dbReference type="GO" id="GO:0008143">
    <property type="term" value="F:poly(A) binding"/>
    <property type="evidence" value="ECO:0000314"/>
    <property type="project" value="EcoCyc"/>
</dbReference>
<dbReference type="GO" id="GO:0042803">
    <property type="term" value="F:protein homodimerization activity"/>
    <property type="evidence" value="ECO:0000314"/>
    <property type="project" value="EcoCyc"/>
</dbReference>
<dbReference type="GO" id="GO:0003723">
    <property type="term" value="F:RNA binding"/>
    <property type="evidence" value="ECO:0000314"/>
    <property type="project" value="EcoliWiki"/>
</dbReference>
<dbReference type="GO" id="GO:0003697">
    <property type="term" value="F:single-stranded DNA binding"/>
    <property type="evidence" value="ECO:0000314"/>
    <property type="project" value="EcoCyc"/>
</dbReference>
<dbReference type="GO" id="GO:0001072">
    <property type="term" value="F:transcription antitermination factor activity, RNA binding"/>
    <property type="evidence" value="ECO:0000314"/>
    <property type="project" value="EcoliWiki"/>
</dbReference>
<dbReference type="GO" id="GO:0060567">
    <property type="term" value="P:negative regulation of termination of DNA-templated transcription"/>
    <property type="evidence" value="ECO:0000314"/>
    <property type="project" value="EcoliWiki"/>
</dbReference>
<dbReference type="GO" id="GO:0010468">
    <property type="term" value="P:regulation of gene expression"/>
    <property type="evidence" value="ECO:0000318"/>
    <property type="project" value="GO_Central"/>
</dbReference>
<dbReference type="GO" id="GO:0031564">
    <property type="term" value="P:transcription antitermination"/>
    <property type="evidence" value="ECO:0000314"/>
    <property type="project" value="EcoCyc"/>
</dbReference>
<dbReference type="CDD" id="cd04458">
    <property type="entry name" value="CSP_CDS"/>
    <property type="match status" value="1"/>
</dbReference>
<dbReference type="FunFam" id="2.40.50.140:FF:000006">
    <property type="entry name" value="Cold shock protein CspC"/>
    <property type="match status" value="1"/>
</dbReference>
<dbReference type="Gene3D" id="6.20.370.130">
    <property type="match status" value="1"/>
</dbReference>
<dbReference type="Gene3D" id="2.40.50.140">
    <property type="entry name" value="Nucleic acid-binding proteins"/>
    <property type="match status" value="1"/>
</dbReference>
<dbReference type="InterPro" id="IPR012156">
    <property type="entry name" value="Cold_shock_CspA"/>
</dbReference>
<dbReference type="InterPro" id="IPR050181">
    <property type="entry name" value="Cold_shock_domain"/>
</dbReference>
<dbReference type="InterPro" id="IPR011129">
    <property type="entry name" value="CSD"/>
</dbReference>
<dbReference type="InterPro" id="IPR019844">
    <property type="entry name" value="CSD_CS"/>
</dbReference>
<dbReference type="InterPro" id="IPR002059">
    <property type="entry name" value="CSP_DNA-bd"/>
</dbReference>
<dbReference type="InterPro" id="IPR012340">
    <property type="entry name" value="NA-bd_OB-fold"/>
</dbReference>
<dbReference type="NCBIfam" id="NF007062">
    <property type="entry name" value="PRK09507.1"/>
    <property type="match status" value="1"/>
</dbReference>
<dbReference type="NCBIfam" id="NF008190">
    <property type="entry name" value="PRK10943.1"/>
    <property type="match status" value="1"/>
</dbReference>
<dbReference type="PANTHER" id="PTHR11544">
    <property type="entry name" value="COLD SHOCK DOMAIN CONTAINING PROTEINS"/>
    <property type="match status" value="1"/>
</dbReference>
<dbReference type="Pfam" id="PF00313">
    <property type="entry name" value="CSD"/>
    <property type="match status" value="1"/>
</dbReference>
<dbReference type="PIRSF" id="PIRSF002599">
    <property type="entry name" value="Cold_shock_A"/>
    <property type="match status" value="1"/>
</dbReference>
<dbReference type="PRINTS" id="PR00050">
    <property type="entry name" value="COLDSHOCK"/>
</dbReference>
<dbReference type="SMART" id="SM00357">
    <property type="entry name" value="CSP"/>
    <property type="match status" value="1"/>
</dbReference>
<dbReference type="SUPFAM" id="SSF50249">
    <property type="entry name" value="Nucleic acid-binding proteins"/>
    <property type="match status" value="1"/>
</dbReference>
<dbReference type="PROSITE" id="PS00352">
    <property type="entry name" value="CSD_1"/>
    <property type="match status" value="1"/>
</dbReference>
<dbReference type="PROSITE" id="PS51857">
    <property type="entry name" value="CSD_2"/>
    <property type="match status" value="1"/>
</dbReference>
<reference key="1">
    <citation type="journal article" date="1994" name="Mol. Microbiol.">
        <title>Cloning, sequencing, and characterization of multicopy suppressors of a mukB mutation in Escherichia coli.</title>
        <authorList>
            <person name="Yamanaka K."/>
            <person name="Mitani T."/>
            <person name="Ogura T."/>
            <person name="Niki H."/>
            <person name="Hiraga S."/>
        </authorList>
    </citation>
    <scope>NUCLEOTIDE SEQUENCE [GENOMIC DNA]</scope>
    <source>
        <strain>K12</strain>
    </source>
</reference>
<reference key="2">
    <citation type="submission" date="1994-02" db="EMBL/GenBank/DDBJ databases">
        <authorList>
            <person name="Ramanathan Y."/>
            <person name="Narayanarao A.S.S."/>
            <person name="Mathur M."/>
            <person name="Mahajan S.K."/>
        </authorList>
    </citation>
    <scope>NUCLEOTIDE SEQUENCE [GENOMIC DNA]</scope>
    <source>
        <strain>K12 / W3110 / ATCC 27325 / DSM 5911</strain>
    </source>
</reference>
<reference key="3">
    <citation type="journal article" date="1996" name="Genetics">
        <title>Overproduction of three genes leads to camphor resistance and chromosome condensation in Escherichia coli.</title>
        <authorList>
            <person name="Hu K.H."/>
            <person name="Liu E."/>
            <person name="Dean K."/>
            <person name="Gingras M."/>
            <person name="Degraff W."/>
            <person name="Trun N.J."/>
        </authorList>
    </citation>
    <scope>NUCLEOTIDE SEQUENCE [GENOMIC DNA]</scope>
</reference>
<reference key="4">
    <citation type="submission" date="1997-01" db="EMBL/GenBank/DDBJ databases">
        <title>Sequence of minutes 4-25 of Escherichia coli.</title>
        <authorList>
            <person name="Chung E."/>
            <person name="Allen E."/>
            <person name="Araujo R."/>
            <person name="Aparicio A.M."/>
            <person name="Davis K."/>
            <person name="Duncan M."/>
            <person name="Federspiel N."/>
            <person name="Hyman R."/>
            <person name="Kalman S."/>
            <person name="Komp C."/>
            <person name="Kurdi O."/>
            <person name="Lew H."/>
            <person name="Lin D."/>
            <person name="Namath A."/>
            <person name="Oefner P."/>
            <person name="Roberts D."/>
            <person name="Schramm S."/>
            <person name="Davis R.W."/>
        </authorList>
    </citation>
    <scope>NUCLEOTIDE SEQUENCE [LARGE SCALE GENOMIC DNA]</scope>
    <source>
        <strain>K12 / MG1655 / ATCC 47076</strain>
    </source>
</reference>
<reference key="5">
    <citation type="journal article" date="1996" name="DNA Res.">
        <title>A 718-kb DNA sequence of the Escherichia coli K-12 genome corresponding to the 12.7-28.0 min region on the linkage map.</title>
        <authorList>
            <person name="Oshima T."/>
            <person name="Aiba H."/>
            <person name="Baba T."/>
            <person name="Fujita K."/>
            <person name="Hayashi K."/>
            <person name="Honjo A."/>
            <person name="Ikemoto K."/>
            <person name="Inada T."/>
            <person name="Itoh T."/>
            <person name="Kajihara M."/>
            <person name="Kanai K."/>
            <person name="Kashimoto K."/>
            <person name="Kimura S."/>
            <person name="Kitagawa M."/>
            <person name="Makino K."/>
            <person name="Masuda S."/>
            <person name="Miki T."/>
            <person name="Mizobuchi K."/>
            <person name="Mori H."/>
            <person name="Motomura K."/>
            <person name="Nakamura Y."/>
            <person name="Nashimoto H."/>
            <person name="Nishio Y."/>
            <person name="Saito N."/>
            <person name="Sampei G."/>
            <person name="Seki Y."/>
            <person name="Tagami H."/>
            <person name="Takemoto K."/>
            <person name="Wada C."/>
            <person name="Yamamoto Y."/>
            <person name="Yano M."/>
            <person name="Horiuchi T."/>
        </authorList>
    </citation>
    <scope>NUCLEOTIDE SEQUENCE [LARGE SCALE GENOMIC DNA]</scope>
    <source>
        <strain>K12 / W3110 / ATCC 27325 / DSM 5911</strain>
    </source>
</reference>
<reference key="6">
    <citation type="journal article" date="1997" name="Science">
        <title>The complete genome sequence of Escherichia coli K-12.</title>
        <authorList>
            <person name="Blattner F.R."/>
            <person name="Plunkett G. III"/>
            <person name="Bloch C.A."/>
            <person name="Perna N.T."/>
            <person name="Burland V."/>
            <person name="Riley M."/>
            <person name="Collado-Vides J."/>
            <person name="Glasner J.D."/>
            <person name="Rode C.K."/>
            <person name="Mayhew G.F."/>
            <person name="Gregor J."/>
            <person name="Davis N.W."/>
            <person name="Kirkpatrick H.A."/>
            <person name="Goeden M.A."/>
            <person name="Rose D.J."/>
            <person name="Mau B."/>
            <person name="Shao Y."/>
        </authorList>
    </citation>
    <scope>NUCLEOTIDE SEQUENCE [LARGE SCALE GENOMIC DNA]</scope>
    <source>
        <strain>K12 / MG1655 / ATCC 47076</strain>
    </source>
</reference>
<reference key="7">
    <citation type="journal article" date="2006" name="Mol. Syst. Biol.">
        <title>Highly accurate genome sequences of Escherichia coli K-12 strains MG1655 and W3110.</title>
        <authorList>
            <person name="Hayashi K."/>
            <person name="Morooka N."/>
            <person name="Yamamoto Y."/>
            <person name="Fujita K."/>
            <person name="Isono K."/>
            <person name="Choi S."/>
            <person name="Ohtsubo E."/>
            <person name="Baba T."/>
            <person name="Wanner B.L."/>
            <person name="Mori H."/>
            <person name="Horiuchi T."/>
        </authorList>
    </citation>
    <scope>NUCLEOTIDE SEQUENCE [LARGE SCALE GENOMIC DNA]</scope>
    <source>
        <strain>K12 / W3110 / ATCC 27325 / DSM 5911</strain>
    </source>
</reference>
<reference key="8">
    <citation type="submission" date="1995-06" db="UniProtKB">
        <authorList>
            <person name="Liu K."/>
            <person name="Hanna M.M."/>
        </authorList>
    </citation>
    <scope>PROTEIN SEQUENCE OF 2-46</scope>
    <source>
        <strain>AD7333</strain>
    </source>
</reference>
<reference key="9">
    <citation type="journal article" date="1994" name="Mol. Microbiol.">
        <title>The cold-shock response -- a hot topic.</title>
        <authorList>
            <person name="Jones P.G."/>
            <person name="Inouye M."/>
        </authorList>
    </citation>
    <scope>GENE NAME</scope>
    <scope>GENE MAPPING</scope>
</reference>
<reference key="10">
    <citation type="journal article" date="2002" name="J. Am. Chem. Soc.">
        <title>Gas-phase concentration, purification, and identification of whole proteins from complex mixtures.</title>
        <authorList>
            <person name="Reid G.E."/>
            <person name="Shang H."/>
            <person name="Hogan J.M."/>
            <person name="Lee G.U."/>
            <person name="McLuckey S.A."/>
        </authorList>
    </citation>
    <scope>MASS SPECTROMETRY</scope>
    <source>
        <strain>ATCC 15597</strain>
    </source>
</reference>
<accession>P0A972</accession>
<accession>P36997</accession>
<accession>P77103</accession>
<accession>P80434</accession>
<sequence>MSKIKGNVKWFNESKGFGFITPEDGSKDVFVHFSAIQTNGFKTLAEGQRVEFEITNGAKGPSAANVIAL</sequence>
<evidence type="ECO:0000250" key="1"/>
<evidence type="ECO:0000269" key="2">
    <source>
    </source>
</evidence>
<evidence type="ECO:0000269" key="3">
    <source ref="8"/>
</evidence>
<evidence type="ECO:0000305" key="4"/>
<name>CSPE_ECOLI</name>
<proteinExistence type="evidence at protein level"/>
<organism>
    <name type="scientific">Escherichia coli (strain K12)</name>
    <dbReference type="NCBI Taxonomy" id="83333"/>
    <lineage>
        <taxon>Bacteria</taxon>
        <taxon>Pseudomonadati</taxon>
        <taxon>Pseudomonadota</taxon>
        <taxon>Gammaproteobacteria</taxon>
        <taxon>Enterobacterales</taxon>
        <taxon>Enterobacteriaceae</taxon>
        <taxon>Escherichia</taxon>
    </lineage>
</organism>
<feature type="initiator methionine" description="Removed" evidence="3">
    <location>
        <position position="1"/>
    </location>
</feature>
<feature type="chain" id="PRO_0000100253" description="Cold shock-like protein CspE">
    <location>
        <begin position="2"/>
        <end position="69"/>
    </location>
</feature>
<feature type="domain" description="CSD">
    <location>
        <begin position="6"/>
        <end position="66"/>
    </location>
</feature>
<feature type="sequence conflict" description="In Ref. 2." evidence="4" ref="2">
    <original>A</original>
    <variation>R</variation>
    <location>
        <position position="58"/>
    </location>
</feature>
<keyword id="KW-0010">Activator</keyword>
<keyword id="KW-0963">Cytoplasm</keyword>
<keyword id="KW-0903">Direct protein sequencing</keyword>
<keyword id="KW-0238">DNA-binding</keyword>
<keyword id="KW-1185">Reference proteome</keyword>
<keyword id="KW-0804">Transcription</keyword>
<keyword id="KW-0805">Transcription regulation</keyword>
<gene>
    <name type="primary">cspE</name>
    <name type="synonym">gicA</name>
    <name type="synonym">msmC</name>
    <name type="ordered locus">b0623</name>
    <name type="ordered locus">JW0618</name>
</gene>